<comment type="function">
    <text evidence="1">Forms part of the ribosomal stalk, playing a central role in the interaction of the ribosome with GTP-bound translation factors.</text>
</comment>
<comment type="subunit">
    <text evidence="1">Part of the ribosomal stalk of the 50S ribosomal subunit. The N-terminus interacts with L11 and the large rRNA to form the base of the stalk. The C-terminus forms an elongated spine to which L12 dimers bind in a sequential fashion forming a multimeric L10(L12)X complex.</text>
</comment>
<comment type="similarity">
    <text evidence="1">Belongs to the universal ribosomal protein uL10 family.</text>
</comment>
<sequence>MSAIIDAKKQEVDIIAEQLKNSVSTVIVDYRGLSVAEVTELRSQLREAGVEYKVLKNTMVRRAAQQAGIDGLDEFLVGPTAVATSTEDVVAPAKVIAGFAKEHQALEIKTGVMEGNVISAEEVNTVGTLPSHDGLVSMLLSVLQAPVRNFAYAVKAVGEDKESKEESAE</sequence>
<accession>Q49V49</accession>
<reference key="1">
    <citation type="journal article" date="2005" name="Proc. Natl. Acad. Sci. U.S.A.">
        <title>Whole genome sequence of Staphylococcus saprophyticus reveals the pathogenesis of uncomplicated urinary tract infection.</title>
        <authorList>
            <person name="Kuroda M."/>
            <person name="Yamashita A."/>
            <person name="Hirakawa H."/>
            <person name="Kumano M."/>
            <person name="Morikawa K."/>
            <person name="Higashide M."/>
            <person name="Maruyama A."/>
            <person name="Inose Y."/>
            <person name="Matoba K."/>
            <person name="Toh H."/>
            <person name="Kuhara S."/>
            <person name="Hattori M."/>
            <person name="Ohta T."/>
        </authorList>
    </citation>
    <scope>NUCLEOTIDE SEQUENCE [LARGE SCALE GENOMIC DNA]</scope>
    <source>
        <strain>ATCC 15305 / DSM 20229 / NCIMB 8711 / NCTC 7292 / S-41</strain>
    </source>
</reference>
<organism>
    <name type="scientific">Staphylococcus saprophyticus subsp. saprophyticus (strain ATCC 15305 / DSM 20229 / NCIMB 8711 / NCTC 7292 / S-41)</name>
    <dbReference type="NCBI Taxonomy" id="342451"/>
    <lineage>
        <taxon>Bacteria</taxon>
        <taxon>Bacillati</taxon>
        <taxon>Bacillota</taxon>
        <taxon>Bacilli</taxon>
        <taxon>Bacillales</taxon>
        <taxon>Staphylococcaceae</taxon>
        <taxon>Staphylococcus</taxon>
    </lineage>
</organism>
<feature type="chain" id="PRO_0000154714" description="Large ribosomal subunit protein uL10">
    <location>
        <begin position="1"/>
        <end position="169"/>
    </location>
</feature>
<name>RL10_STAS1</name>
<proteinExistence type="inferred from homology"/>
<dbReference type="EMBL" id="AP008934">
    <property type="protein sequence ID" value="BAE19361.1"/>
    <property type="molecule type" value="Genomic_DNA"/>
</dbReference>
<dbReference type="RefSeq" id="WP_002484163.1">
    <property type="nucleotide sequence ID" value="NZ_MTGA01000039.1"/>
</dbReference>
<dbReference type="SMR" id="Q49V49"/>
<dbReference type="GeneID" id="66868370"/>
<dbReference type="KEGG" id="ssp:SSP2216"/>
<dbReference type="eggNOG" id="COG0244">
    <property type="taxonomic scope" value="Bacteria"/>
</dbReference>
<dbReference type="HOGENOM" id="CLU_092227_2_0_9"/>
<dbReference type="OrthoDB" id="9808307at2"/>
<dbReference type="Proteomes" id="UP000006371">
    <property type="component" value="Chromosome"/>
</dbReference>
<dbReference type="GO" id="GO:0015934">
    <property type="term" value="C:large ribosomal subunit"/>
    <property type="evidence" value="ECO:0007669"/>
    <property type="project" value="InterPro"/>
</dbReference>
<dbReference type="GO" id="GO:0070180">
    <property type="term" value="F:large ribosomal subunit rRNA binding"/>
    <property type="evidence" value="ECO:0007669"/>
    <property type="project" value="UniProtKB-UniRule"/>
</dbReference>
<dbReference type="GO" id="GO:0003735">
    <property type="term" value="F:structural constituent of ribosome"/>
    <property type="evidence" value="ECO:0007669"/>
    <property type="project" value="InterPro"/>
</dbReference>
<dbReference type="GO" id="GO:0006412">
    <property type="term" value="P:translation"/>
    <property type="evidence" value="ECO:0007669"/>
    <property type="project" value="UniProtKB-UniRule"/>
</dbReference>
<dbReference type="CDD" id="cd05797">
    <property type="entry name" value="Ribosomal_L10"/>
    <property type="match status" value="1"/>
</dbReference>
<dbReference type="FunFam" id="3.30.70.1730:FF:000001">
    <property type="entry name" value="50S ribosomal protein L10"/>
    <property type="match status" value="1"/>
</dbReference>
<dbReference type="Gene3D" id="3.30.70.1730">
    <property type="match status" value="1"/>
</dbReference>
<dbReference type="HAMAP" id="MF_00362">
    <property type="entry name" value="Ribosomal_uL10"/>
    <property type="match status" value="1"/>
</dbReference>
<dbReference type="InterPro" id="IPR001790">
    <property type="entry name" value="Ribosomal_uL10"/>
</dbReference>
<dbReference type="InterPro" id="IPR043141">
    <property type="entry name" value="Ribosomal_uL10-like_sf"/>
</dbReference>
<dbReference type="InterPro" id="IPR022973">
    <property type="entry name" value="Ribosomal_uL10_bac"/>
</dbReference>
<dbReference type="InterPro" id="IPR047865">
    <property type="entry name" value="Ribosomal_uL10_bac_type"/>
</dbReference>
<dbReference type="InterPro" id="IPR002363">
    <property type="entry name" value="Ribosomal_uL10_CS_bac"/>
</dbReference>
<dbReference type="NCBIfam" id="NF000955">
    <property type="entry name" value="PRK00099.1-1"/>
    <property type="match status" value="1"/>
</dbReference>
<dbReference type="PANTHER" id="PTHR11560">
    <property type="entry name" value="39S RIBOSOMAL PROTEIN L10, MITOCHONDRIAL"/>
    <property type="match status" value="1"/>
</dbReference>
<dbReference type="Pfam" id="PF00466">
    <property type="entry name" value="Ribosomal_L10"/>
    <property type="match status" value="1"/>
</dbReference>
<dbReference type="SUPFAM" id="SSF160369">
    <property type="entry name" value="Ribosomal protein L10-like"/>
    <property type="match status" value="1"/>
</dbReference>
<dbReference type="PROSITE" id="PS01109">
    <property type="entry name" value="RIBOSOMAL_L10"/>
    <property type="match status" value="1"/>
</dbReference>
<evidence type="ECO:0000255" key="1">
    <source>
        <dbReference type="HAMAP-Rule" id="MF_00362"/>
    </source>
</evidence>
<evidence type="ECO:0000305" key="2"/>
<gene>
    <name evidence="1" type="primary">rplJ</name>
    <name type="ordered locus">SSP2216</name>
</gene>
<keyword id="KW-1185">Reference proteome</keyword>
<keyword id="KW-0687">Ribonucleoprotein</keyword>
<keyword id="KW-0689">Ribosomal protein</keyword>
<keyword id="KW-0694">RNA-binding</keyword>
<keyword id="KW-0699">rRNA-binding</keyword>
<protein>
    <recommendedName>
        <fullName evidence="1">Large ribosomal subunit protein uL10</fullName>
    </recommendedName>
    <alternativeName>
        <fullName evidence="2">50S ribosomal protein L10</fullName>
    </alternativeName>
</protein>